<gene>
    <name evidence="1" type="primary">pnp</name>
    <name type="ordered locus">Noc_2116</name>
</gene>
<organism>
    <name type="scientific">Nitrosococcus oceani (strain ATCC 19707 / BCRC 17464 / JCM 30415 / NCIMB 11848 / C-107)</name>
    <dbReference type="NCBI Taxonomy" id="323261"/>
    <lineage>
        <taxon>Bacteria</taxon>
        <taxon>Pseudomonadati</taxon>
        <taxon>Pseudomonadota</taxon>
        <taxon>Gammaproteobacteria</taxon>
        <taxon>Chromatiales</taxon>
        <taxon>Chromatiaceae</taxon>
        <taxon>Nitrosococcus</taxon>
    </lineage>
</organism>
<protein>
    <recommendedName>
        <fullName evidence="1">Polyribonucleotide nucleotidyltransferase</fullName>
        <ecNumber evidence="1">2.7.7.8</ecNumber>
    </recommendedName>
    <alternativeName>
        <fullName evidence="1">Polynucleotide phosphorylase</fullName>
        <shortName evidence="1">PNPase</shortName>
    </alternativeName>
</protein>
<reference key="1">
    <citation type="journal article" date="2006" name="Appl. Environ. Microbiol.">
        <title>Complete genome sequence of the marine, chemolithoautotrophic, ammonia-oxidizing bacterium Nitrosococcus oceani ATCC 19707.</title>
        <authorList>
            <person name="Klotz M.G."/>
            <person name="Arp D.J."/>
            <person name="Chain P.S.G."/>
            <person name="El-Sheikh A.F."/>
            <person name="Hauser L.J."/>
            <person name="Hommes N.G."/>
            <person name="Larimer F.W."/>
            <person name="Malfatti S.A."/>
            <person name="Norton J.M."/>
            <person name="Poret-Peterson A.T."/>
            <person name="Vergez L.M."/>
            <person name="Ward B.B."/>
        </authorList>
    </citation>
    <scope>NUCLEOTIDE SEQUENCE [LARGE SCALE GENOMIC DNA]</scope>
    <source>
        <strain>ATCC 19707 / BCRC 17464 / JCM 30415 / NCIMB 11848 / C-107</strain>
    </source>
</reference>
<feature type="chain" id="PRO_0000329736" description="Polyribonucleotide nucleotidyltransferase">
    <location>
        <begin position="1"/>
        <end position="695"/>
    </location>
</feature>
<feature type="domain" description="KH" evidence="1">
    <location>
        <begin position="553"/>
        <end position="612"/>
    </location>
</feature>
<feature type="domain" description="S1 motif" evidence="1">
    <location>
        <begin position="622"/>
        <end position="690"/>
    </location>
</feature>
<feature type="binding site" evidence="1">
    <location>
        <position position="486"/>
    </location>
    <ligand>
        <name>Mg(2+)</name>
        <dbReference type="ChEBI" id="CHEBI:18420"/>
    </ligand>
</feature>
<feature type="binding site" evidence="1">
    <location>
        <position position="492"/>
    </location>
    <ligand>
        <name>Mg(2+)</name>
        <dbReference type="ChEBI" id="CHEBI:18420"/>
    </ligand>
</feature>
<comment type="function">
    <text evidence="1">Involved in mRNA degradation. Catalyzes the phosphorolysis of single-stranded polyribonucleotides processively in the 3'- to 5'-direction.</text>
</comment>
<comment type="catalytic activity">
    <reaction evidence="1">
        <text>RNA(n+1) + phosphate = RNA(n) + a ribonucleoside 5'-diphosphate</text>
        <dbReference type="Rhea" id="RHEA:22096"/>
        <dbReference type="Rhea" id="RHEA-COMP:14527"/>
        <dbReference type="Rhea" id="RHEA-COMP:17342"/>
        <dbReference type="ChEBI" id="CHEBI:43474"/>
        <dbReference type="ChEBI" id="CHEBI:57930"/>
        <dbReference type="ChEBI" id="CHEBI:140395"/>
        <dbReference type="EC" id="2.7.7.8"/>
    </reaction>
</comment>
<comment type="cofactor">
    <cofactor evidence="1">
        <name>Mg(2+)</name>
        <dbReference type="ChEBI" id="CHEBI:18420"/>
    </cofactor>
</comment>
<comment type="subunit">
    <text evidence="1">Component of the RNA degradosome, which is a multiprotein complex involved in RNA processing and mRNA degradation.</text>
</comment>
<comment type="subcellular location">
    <subcellularLocation>
        <location evidence="1">Cytoplasm</location>
    </subcellularLocation>
</comment>
<comment type="similarity">
    <text evidence="1">Belongs to the polyribonucleotide nucleotidyltransferase family.</text>
</comment>
<accession>Q3J9C0</accession>
<keyword id="KW-0963">Cytoplasm</keyword>
<keyword id="KW-0460">Magnesium</keyword>
<keyword id="KW-0479">Metal-binding</keyword>
<keyword id="KW-0548">Nucleotidyltransferase</keyword>
<keyword id="KW-1185">Reference proteome</keyword>
<keyword id="KW-0694">RNA-binding</keyword>
<keyword id="KW-0808">Transferase</keyword>
<evidence type="ECO:0000255" key="1">
    <source>
        <dbReference type="HAMAP-Rule" id="MF_01595"/>
    </source>
</evidence>
<sequence>MTPIKKVIEYGDRSLVLETGCIARQASGAVVVRYGETVVLVTVVGMKEAAEGRDFFPLTVNYQERTYAAGKIPGGFFKREGRPTEKETLTSRLIDRPLRPLFPKNFINEVQVIATVISSDSENDPDIPSLIGASAALALSGIPFTTPIAAARVGYIDGQYVLNPTLGQMEKSALDLVVAGTEKAVLMVESEAQELPEEIMLGSVMFAHQEMQVVIQAIRELAEEAGKPAWDWKPPIEEEDLKSAVQEVGEARAQEAYQIRSKQERQASLAELRNSIVESLVPEENSRWSREQVLEAIGALEKRLVREQILSGGERIDGRDATAIRPINISTGLLPRTHGSALFTRGETQSLVATTLGTERDAQVIDAIEGERRERFMLHYNFPPYCVGETGFVGSPKRREIGHGRLAKRSLNGVVPDEESFPYVIRVVSEITESNGSSSMATVCGTSLSLMDAGVPIKAPVAGIAMGLIKEKDRFAVLSDILGDEDHLGDMDFKVAGTEKGITALQMDIKIDGITEEIMRTALSQAREGRFYILQKMNEIISTPRQEMSEYAPRMIVFKINPEKIRDVIGKGGATIRALTEETGTTIDIVDDGTVKIFSADKADGQEAKRRVEEIVSDVEVGKIYEGRVSRLMDFGAFVTILPGKDGLLHISQISAERVKNVSDKLSEGDVIRVKVLEVDKQGRVRLSVKAIGNE</sequence>
<proteinExistence type="inferred from homology"/>
<dbReference type="EC" id="2.7.7.8" evidence="1"/>
<dbReference type="EMBL" id="CP000127">
    <property type="protein sequence ID" value="ABA58576.1"/>
    <property type="molecule type" value="Genomic_DNA"/>
</dbReference>
<dbReference type="RefSeq" id="WP_002809232.1">
    <property type="nucleotide sequence ID" value="NC_007484.1"/>
</dbReference>
<dbReference type="SMR" id="Q3J9C0"/>
<dbReference type="FunCoup" id="Q3J9C0">
    <property type="interactions" value="564"/>
</dbReference>
<dbReference type="STRING" id="323261.Noc_2116"/>
<dbReference type="KEGG" id="noc:Noc_2116"/>
<dbReference type="eggNOG" id="COG1185">
    <property type="taxonomic scope" value="Bacteria"/>
</dbReference>
<dbReference type="HOGENOM" id="CLU_004217_2_2_6"/>
<dbReference type="InParanoid" id="Q3J9C0"/>
<dbReference type="Proteomes" id="UP000006838">
    <property type="component" value="Chromosome"/>
</dbReference>
<dbReference type="GO" id="GO:0005829">
    <property type="term" value="C:cytosol"/>
    <property type="evidence" value="ECO:0007669"/>
    <property type="project" value="TreeGrafter"/>
</dbReference>
<dbReference type="GO" id="GO:0000175">
    <property type="term" value="F:3'-5'-RNA exonuclease activity"/>
    <property type="evidence" value="ECO:0007669"/>
    <property type="project" value="TreeGrafter"/>
</dbReference>
<dbReference type="GO" id="GO:0000287">
    <property type="term" value="F:magnesium ion binding"/>
    <property type="evidence" value="ECO:0007669"/>
    <property type="project" value="UniProtKB-UniRule"/>
</dbReference>
<dbReference type="GO" id="GO:0004654">
    <property type="term" value="F:polyribonucleotide nucleotidyltransferase activity"/>
    <property type="evidence" value="ECO:0007669"/>
    <property type="project" value="UniProtKB-UniRule"/>
</dbReference>
<dbReference type="GO" id="GO:0003723">
    <property type="term" value="F:RNA binding"/>
    <property type="evidence" value="ECO:0007669"/>
    <property type="project" value="UniProtKB-UniRule"/>
</dbReference>
<dbReference type="GO" id="GO:0006402">
    <property type="term" value="P:mRNA catabolic process"/>
    <property type="evidence" value="ECO:0007669"/>
    <property type="project" value="UniProtKB-UniRule"/>
</dbReference>
<dbReference type="GO" id="GO:0006396">
    <property type="term" value="P:RNA processing"/>
    <property type="evidence" value="ECO:0007669"/>
    <property type="project" value="InterPro"/>
</dbReference>
<dbReference type="CDD" id="cd02393">
    <property type="entry name" value="KH-I_PNPase"/>
    <property type="match status" value="1"/>
</dbReference>
<dbReference type="CDD" id="cd11363">
    <property type="entry name" value="RNase_PH_PNPase_1"/>
    <property type="match status" value="1"/>
</dbReference>
<dbReference type="CDD" id="cd11364">
    <property type="entry name" value="RNase_PH_PNPase_2"/>
    <property type="match status" value="1"/>
</dbReference>
<dbReference type="CDD" id="cd04472">
    <property type="entry name" value="S1_PNPase"/>
    <property type="match status" value="1"/>
</dbReference>
<dbReference type="FunFam" id="2.40.50.140:FF:000023">
    <property type="entry name" value="Polyribonucleotide nucleotidyltransferase"/>
    <property type="match status" value="1"/>
</dbReference>
<dbReference type="FunFam" id="3.30.1370.10:FF:000001">
    <property type="entry name" value="Polyribonucleotide nucleotidyltransferase"/>
    <property type="match status" value="1"/>
</dbReference>
<dbReference type="FunFam" id="3.30.230.70:FF:000001">
    <property type="entry name" value="Polyribonucleotide nucleotidyltransferase"/>
    <property type="match status" value="1"/>
</dbReference>
<dbReference type="FunFam" id="3.30.230.70:FF:000002">
    <property type="entry name" value="Polyribonucleotide nucleotidyltransferase"/>
    <property type="match status" value="1"/>
</dbReference>
<dbReference type="Gene3D" id="3.30.230.70">
    <property type="entry name" value="GHMP Kinase, N-terminal domain"/>
    <property type="match status" value="2"/>
</dbReference>
<dbReference type="Gene3D" id="3.30.1370.10">
    <property type="entry name" value="K Homology domain, type 1"/>
    <property type="match status" value="1"/>
</dbReference>
<dbReference type="Gene3D" id="2.40.50.140">
    <property type="entry name" value="Nucleic acid-binding proteins"/>
    <property type="match status" value="1"/>
</dbReference>
<dbReference type="HAMAP" id="MF_01595">
    <property type="entry name" value="PNPase"/>
    <property type="match status" value="1"/>
</dbReference>
<dbReference type="InterPro" id="IPR001247">
    <property type="entry name" value="ExoRNase_PH_dom1"/>
</dbReference>
<dbReference type="InterPro" id="IPR015847">
    <property type="entry name" value="ExoRNase_PH_dom2"/>
</dbReference>
<dbReference type="InterPro" id="IPR036345">
    <property type="entry name" value="ExoRNase_PH_dom2_sf"/>
</dbReference>
<dbReference type="InterPro" id="IPR004087">
    <property type="entry name" value="KH_dom"/>
</dbReference>
<dbReference type="InterPro" id="IPR004088">
    <property type="entry name" value="KH_dom_type_1"/>
</dbReference>
<dbReference type="InterPro" id="IPR036612">
    <property type="entry name" value="KH_dom_type_1_sf"/>
</dbReference>
<dbReference type="InterPro" id="IPR012340">
    <property type="entry name" value="NA-bd_OB-fold"/>
</dbReference>
<dbReference type="InterPro" id="IPR012162">
    <property type="entry name" value="PNPase"/>
</dbReference>
<dbReference type="InterPro" id="IPR027408">
    <property type="entry name" value="PNPase/RNase_PH_dom_sf"/>
</dbReference>
<dbReference type="InterPro" id="IPR015848">
    <property type="entry name" value="PNPase_PH_RNA-bd_bac/org-type"/>
</dbReference>
<dbReference type="InterPro" id="IPR020568">
    <property type="entry name" value="Ribosomal_Su5_D2-typ_SF"/>
</dbReference>
<dbReference type="InterPro" id="IPR003029">
    <property type="entry name" value="S1_domain"/>
</dbReference>
<dbReference type="NCBIfam" id="TIGR03591">
    <property type="entry name" value="polynuc_phos"/>
    <property type="match status" value="1"/>
</dbReference>
<dbReference type="NCBIfam" id="NF008805">
    <property type="entry name" value="PRK11824.1"/>
    <property type="match status" value="1"/>
</dbReference>
<dbReference type="PANTHER" id="PTHR11252">
    <property type="entry name" value="POLYRIBONUCLEOTIDE NUCLEOTIDYLTRANSFERASE"/>
    <property type="match status" value="1"/>
</dbReference>
<dbReference type="PANTHER" id="PTHR11252:SF0">
    <property type="entry name" value="POLYRIBONUCLEOTIDE NUCLEOTIDYLTRANSFERASE 1, MITOCHONDRIAL"/>
    <property type="match status" value="1"/>
</dbReference>
<dbReference type="Pfam" id="PF00013">
    <property type="entry name" value="KH_1"/>
    <property type="match status" value="1"/>
</dbReference>
<dbReference type="Pfam" id="PF03726">
    <property type="entry name" value="PNPase"/>
    <property type="match status" value="1"/>
</dbReference>
<dbReference type="Pfam" id="PF01138">
    <property type="entry name" value="RNase_PH"/>
    <property type="match status" value="2"/>
</dbReference>
<dbReference type="Pfam" id="PF03725">
    <property type="entry name" value="RNase_PH_C"/>
    <property type="match status" value="2"/>
</dbReference>
<dbReference type="Pfam" id="PF00575">
    <property type="entry name" value="S1"/>
    <property type="match status" value="1"/>
</dbReference>
<dbReference type="PIRSF" id="PIRSF005499">
    <property type="entry name" value="PNPase"/>
    <property type="match status" value="1"/>
</dbReference>
<dbReference type="SMART" id="SM00322">
    <property type="entry name" value="KH"/>
    <property type="match status" value="1"/>
</dbReference>
<dbReference type="SMART" id="SM00316">
    <property type="entry name" value="S1"/>
    <property type="match status" value="1"/>
</dbReference>
<dbReference type="SUPFAM" id="SSF54791">
    <property type="entry name" value="Eukaryotic type KH-domain (KH-domain type I)"/>
    <property type="match status" value="1"/>
</dbReference>
<dbReference type="SUPFAM" id="SSF50249">
    <property type="entry name" value="Nucleic acid-binding proteins"/>
    <property type="match status" value="1"/>
</dbReference>
<dbReference type="SUPFAM" id="SSF55666">
    <property type="entry name" value="Ribonuclease PH domain 2-like"/>
    <property type="match status" value="2"/>
</dbReference>
<dbReference type="SUPFAM" id="SSF54211">
    <property type="entry name" value="Ribosomal protein S5 domain 2-like"/>
    <property type="match status" value="2"/>
</dbReference>
<dbReference type="PROSITE" id="PS50084">
    <property type="entry name" value="KH_TYPE_1"/>
    <property type="match status" value="1"/>
</dbReference>
<dbReference type="PROSITE" id="PS50126">
    <property type="entry name" value="S1"/>
    <property type="match status" value="1"/>
</dbReference>
<name>PNP_NITOC</name>